<proteinExistence type="inferred from homology"/>
<dbReference type="EC" id="4.2.1.96" evidence="1"/>
<dbReference type="EMBL" id="CR936257">
    <property type="protein sequence ID" value="CAI48974.1"/>
    <property type="molecule type" value="Genomic_DNA"/>
</dbReference>
<dbReference type="RefSeq" id="WP_011322607.1">
    <property type="nucleotide sequence ID" value="NC_007426.1"/>
</dbReference>
<dbReference type="SMR" id="Q3ISB3"/>
<dbReference type="STRING" id="348780.NP_1766A"/>
<dbReference type="EnsemblBacteria" id="CAI48974">
    <property type="protein sequence ID" value="CAI48974"/>
    <property type="gene ID" value="NP_1766A"/>
</dbReference>
<dbReference type="GeneID" id="3701250"/>
<dbReference type="KEGG" id="nph:NP_1766A"/>
<dbReference type="eggNOG" id="arCOG02939">
    <property type="taxonomic scope" value="Archaea"/>
</dbReference>
<dbReference type="HOGENOM" id="CLU_081974_4_0_2"/>
<dbReference type="OrthoDB" id="10495at2157"/>
<dbReference type="Proteomes" id="UP000002698">
    <property type="component" value="Chromosome"/>
</dbReference>
<dbReference type="GO" id="GO:0008124">
    <property type="term" value="F:4-alpha-hydroxytetrahydrobiopterin dehydratase activity"/>
    <property type="evidence" value="ECO:0007669"/>
    <property type="project" value="UniProtKB-UniRule"/>
</dbReference>
<dbReference type="GO" id="GO:0006729">
    <property type="term" value="P:tetrahydrobiopterin biosynthetic process"/>
    <property type="evidence" value="ECO:0007669"/>
    <property type="project" value="InterPro"/>
</dbReference>
<dbReference type="CDD" id="cd00488">
    <property type="entry name" value="PCD_DCoH"/>
    <property type="match status" value="1"/>
</dbReference>
<dbReference type="Gene3D" id="3.30.1360.20">
    <property type="entry name" value="Transcriptional coactivator/pterin dehydratase"/>
    <property type="match status" value="1"/>
</dbReference>
<dbReference type="HAMAP" id="MF_00434">
    <property type="entry name" value="Pterin_4_alpha"/>
    <property type="match status" value="1"/>
</dbReference>
<dbReference type="InterPro" id="IPR036428">
    <property type="entry name" value="PCD_sf"/>
</dbReference>
<dbReference type="InterPro" id="IPR001533">
    <property type="entry name" value="Pterin_deHydtase"/>
</dbReference>
<dbReference type="NCBIfam" id="NF002017">
    <property type="entry name" value="PRK00823.1-2"/>
    <property type="match status" value="1"/>
</dbReference>
<dbReference type="PANTHER" id="PTHR12599">
    <property type="entry name" value="PTERIN-4-ALPHA-CARBINOLAMINE DEHYDRATASE"/>
    <property type="match status" value="1"/>
</dbReference>
<dbReference type="PANTHER" id="PTHR12599:SF0">
    <property type="entry name" value="PTERIN-4-ALPHA-CARBINOLAMINE DEHYDRATASE"/>
    <property type="match status" value="1"/>
</dbReference>
<dbReference type="Pfam" id="PF01329">
    <property type="entry name" value="Pterin_4a"/>
    <property type="match status" value="1"/>
</dbReference>
<dbReference type="SUPFAM" id="SSF55248">
    <property type="entry name" value="PCD-like"/>
    <property type="match status" value="1"/>
</dbReference>
<accession>Q3ISB3</accession>
<comment type="catalytic activity">
    <reaction evidence="1">
        <text>(4aS,6R)-4a-hydroxy-L-erythro-5,6,7,8-tetrahydrobiopterin = (6R)-L-erythro-6,7-dihydrobiopterin + H2O</text>
        <dbReference type="Rhea" id="RHEA:11920"/>
        <dbReference type="ChEBI" id="CHEBI:15377"/>
        <dbReference type="ChEBI" id="CHEBI:15642"/>
        <dbReference type="ChEBI" id="CHEBI:43120"/>
        <dbReference type="EC" id="4.2.1.96"/>
    </reaction>
</comment>
<comment type="similarity">
    <text evidence="1">Belongs to the pterin-4-alpha-carbinolamine dehydratase family.</text>
</comment>
<sequence>MSDRLTDDEIQAQLPAAWDRDGDEIVRTFEFESYLEGVGFASAAGGLAEEAFHHPEMTIGWREVEVRLTTHDAGGITQKDIDLAERFDELAE</sequence>
<reference key="1">
    <citation type="journal article" date="2005" name="Genome Res.">
        <title>Living with two extremes: conclusions from the genome sequence of Natronomonas pharaonis.</title>
        <authorList>
            <person name="Falb M."/>
            <person name="Pfeiffer F."/>
            <person name="Palm P."/>
            <person name="Rodewald K."/>
            <person name="Hickmann V."/>
            <person name="Tittor J."/>
            <person name="Oesterhelt D."/>
        </authorList>
    </citation>
    <scope>NUCLEOTIDE SEQUENCE [LARGE SCALE GENOMIC DNA]</scope>
    <source>
        <strain>ATCC 35678 / DSM 2160 / CIP 103997 / JCM 8858 / NBRC 14720 / NCIMB 2260 / Gabara</strain>
    </source>
</reference>
<organism>
    <name type="scientific">Natronomonas pharaonis (strain ATCC 35678 / DSM 2160 / CIP 103997 / JCM 8858 / NBRC 14720 / NCIMB 2260 / Gabara)</name>
    <name type="common">Halobacterium pharaonis</name>
    <dbReference type="NCBI Taxonomy" id="348780"/>
    <lineage>
        <taxon>Archaea</taxon>
        <taxon>Methanobacteriati</taxon>
        <taxon>Methanobacteriota</taxon>
        <taxon>Stenosarchaea group</taxon>
        <taxon>Halobacteria</taxon>
        <taxon>Halobacteriales</taxon>
        <taxon>Haloarculaceae</taxon>
        <taxon>Natronomonas</taxon>
    </lineage>
</organism>
<gene>
    <name type="ordered locus">NP_1766A</name>
</gene>
<evidence type="ECO:0000255" key="1">
    <source>
        <dbReference type="HAMAP-Rule" id="MF_00434"/>
    </source>
</evidence>
<protein>
    <recommendedName>
        <fullName evidence="1">Putative pterin-4-alpha-carbinolamine dehydratase</fullName>
        <shortName evidence="1">PHS</shortName>
        <ecNumber evidence="1">4.2.1.96</ecNumber>
    </recommendedName>
    <alternativeName>
        <fullName evidence="1">4-alpha-hydroxy-tetrahydropterin dehydratase</fullName>
    </alternativeName>
    <alternativeName>
        <fullName evidence="1">Pterin carbinolamine dehydratase</fullName>
        <shortName evidence="1">PCD</shortName>
    </alternativeName>
</protein>
<keyword id="KW-0456">Lyase</keyword>
<keyword id="KW-1185">Reference proteome</keyword>
<feature type="chain" id="PRO_0000231482" description="Putative pterin-4-alpha-carbinolamine dehydratase">
    <location>
        <begin position="1"/>
        <end position="92"/>
    </location>
</feature>
<name>PHS_NATPD</name>